<organism>
    <name type="scientific">Arabidopsis thaliana</name>
    <name type="common">Mouse-ear cress</name>
    <dbReference type="NCBI Taxonomy" id="3702"/>
    <lineage>
        <taxon>Eukaryota</taxon>
        <taxon>Viridiplantae</taxon>
        <taxon>Streptophyta</taxon>
        <taxon>Embryophyta</taxon>
        <taxon>Tracheophyta</taxon>
        <taxon>Spermatophyta</taxon>
        <taxon>Magnoliopsida</taxon>
        <taxon>eudicotyledons</taxon>
        <taxon>Gunneridae</taxon>
        <taxon>Pentapetalae</taxon>
        <taxon>rosids</taxon>
        <taxon>malvids</taxon>
        <taxon>Brassicales</taxon>
        <taxon>Brassicaceae</taxon>
        <taxon>Camelineae</taxon>
        <taxon>Arabidopsis</taxon>
    </lineage>
</organism>
<proteinExistence type="evidence at protein level"/>
<feature type="transit peptide" description="Chloroplast" evidence="2 9">
    <location>
        <begin position="1"/>
        <end position="76"/>
    </location>
</feature>
<feature type="chain" id="PRO_0000422096" description="Plastidal glycolate/glycerate translocator 1, chloroplastic">
    <location>
        <begin position="77"/>
        <end position="512"/>
    </location>
</feature>
<feature type="transmembrane region" description="Helical" evidence="1">
    <location>
        <begin position="93"/>
        <end position="113"/>
    </location>
</feature>
<feature type="transmembrane region" description="Helical" evidence="1">
    <location>
        <begin position="127"/>
        <end position="147"/>
    </location>
</feature>
<feature type="transmembrane region" description="Helical" evidence="1">
    <location>
        <begin position="160"/>
        <end position="180"/>
    </location>
</feature>
<feature type="transmembrane region" description="Helical" evidence="1">
    <location>
        <begin position="195"/>
        <end position="215"/>
    </location>
</feature>
<feature type="transmembrane region" description="Helical" evidence="1">
    <location>
        <begin position="238"/>
        <end position="258"/>
    </location>
</feature>
<feature type="transmembrane region" description="Helical" evidence="1">
    <location>
        <begin position="270"/>
        <end position="290"/>
    </location>
</feature>
<feature type="transmembrane region" description="Helical" evidence="1">
    <location>
        <begin position="293"/>
        <end position="313"/>
    </location>
</feature>
<feature type="transmembrane region" description="Helical" evidence="1">
    <location>
        <begin position="336"/>
        <end position="356"/>
    </location>
</feature>
<feature type="transmembrane region" description="Helical" evidence="1">
    <location>
        <begin position="367"/>
        <end position="387"/>
    </location>
</feature>
<feature type="transmembrane region" description="Helical" evidence="1">
    <location>
        <begin position="398"/>
        <end position="418"/>
    </location>
</feature>
<feature type="transmembrane region" description="Helical" evidence="1">
    <location>
        <begin position="425"/>
        <end position="445"/>
    </location>
</feature>
<feature type="transmembrane region" description="Helical" evidence="1">
    <location>
        <begin position="480"/>
        <end position="500"/>
    </location>
</feature>
<feature type="modified residue" description="N-acetylalanine" evidence="2 9">
    <location>
        <position position="77"/>
    </location>
</feature>
<feature type="sequence conflict" description="In Ref. 4; AAM65181." evidence="6" ref="4">
    <original>K</original>
    <variation>N</variation>
    <location>
        <position position="26"/>
    </location>
</feature>
<name>PLGG1_ARATH</name>
<dbReference type="EMBL" id="AC074309">
    <property type="protein sequence ID" value="AAG50795.1"/>
    <property type="molecule type" value="Genomic_DNA"/>
</dbReference>
<dbReference type="EMBL" id="AC084165">
    <property type="protein sequence ID" value="AAG23435.1"/>
    <property type="molecule type" value="Genomic_DNA"/>
</dbReference>
<dbReference type="EMBL" id="CP002684">
    <property type="protein sequence ID" value="AEE31434.1"/>
    <property type="molecule type" value="Genomic_DNA"/>
</dbReference>
<dbReference type="EMBL" id="AY039880">
    <property type="protein sequence ID" value="AAK63984.1"/>
    <property type="molecule type" value="mRNA"/>
</dbReference>
<dbReference type="EMBL" id="AY101515">
    <property type="protein sequence ID" value="AAM26636.1"/>
    <property type="molecule type" value="mRNA"/>
</dbReference>
<dbReference type="EMBL" id="AY087643">
    <property type="protein sequence ID" value="AAM65181.1"/>
    <property type="molecule type" value="mRNA"/>
</dbReference>
<dbReference type="PIR" id="B86445">
    <property type="entry name" value="B86445"/>
</dbReference>
<dbReference type="RefSeq" id="NP_564388.1">
    <property type="nucleotide sequence ID" value="NM_102942.4"/>
</dbReference>
<dbReference type="BioGRID" id="25334">
    <property type="interactions" value="1"/>
</dbReference>
<dbReference type="FunCoup" id="Q9FVQ4">
    <property type="interactions" value="841"/>
</dbReference>
<dbReference type="STRING" id="3702.Q9FVQ4"/>
<dbReference type="TCDB" id="2.A.122.2.1">
    <property type="family name" value="the lrgb/cidb holin-like glycolate/glycerate transporter (lrgb/cidb/ggt) family"/>
</dbReference>
<dbReference type="iPTMnet" id="Q9FVQ4"/>
<dbReference type="PaxDb" id="3702-AT1G32080.1"/>
<dbReference type="ProteomicsDB" id="234917"/>
<dbReference type="EnsemblPlants" id="AT1G32080.1">
    <property type="protein sequence ID" value="AT1G32080.1"/>
    <property type="gene ID" value="AT1G32080"/>
</dbReference>
<dbReference type="GeneID" id="840100"/>
<dbReference type="Gramene" id="AT1G32080.1">
    <property type="protein sequence ID" value="AT1G32080.1"/>
    <property type="gene ID" value="AT1G32080"/>
</dbReference>
<dbReference type="KEGG" id="ath:AT1G32080"/>
<dbReference type="Araport" id="AT1G32080"/>
<dbReference type="TAIR" id="AT1G32080">
    <property type="gene designation" value="LRGB"/>
</dbReference>
<dbReference type="eggNOG" id="ENOG502QQ63">
    <property type="taxonomic scope" value="Eukaryota"/>
</dbReference>
<dbReference type="HOGENOM" id="CLU_036862_1_0_1"/>
<dbReference type="InParanoid" id="Q9FVQ4"/>
<dbReference type="OMA" id="MGKPSPF"/>
<dbReference type="PhylomeDB" id="Q9FVQ4"/>
<dbReference type="PRO" id="PR:Q9FVQ4"/>
<dbReference type="Proteomes" id="UP000006548">
    <property type="component" value="Chromosome 1"/>
</dbReference>
<dbReference type="ExpressionAtlas" id="Q9FVQ4">
    <property type="expression patterns" value="baseline and differential"/>
</dbReference>
<dbReference type="GO" id="GO:0009507">
    <property type="term" value="C:chloroplast"/>
    <property type="evidence" value="ECO:0007005"/>
    <property type="project" value="TAIR"/>
</dbReference>
<dbReference type="GO" id="GO:0009941">
    <property type="term" value="C:chloroplast envelope"/>
    <property type="evidence" value="ECO:0000314"/>
    <property type="project" value="UniProtKB"/>
</dbReference>
<dbReference type="GO" id="GO:0009706">
    <property type="term" value="C:chloroplast inner membrane"/>
    <property type="evidence" value="ECO:0000314"/>
    <property type="project" value="TAIR"/>
</dbReference>
<dbReference type="GO" id="GO:1901974">
    <property type="term" value="F:glycerate transmembrane transporter activity"/>
    <property type="evidence" value="ECO:0000315"/>
    <property type="project" value="UniProtKB"/>
</dbReference>
<dbReference type="GO" id="GO:0043879">
    <property type="term" value="F:glycolate transmembrane transporter activity"/>
    <property type="evidence" value="ECO:0000315"/>
    <property type="project" value="UniProtKB"/>
</dbReference>
<dbReference type="GO" id="GO:0042631">
    <property type="term" value="P:cellular response to water deprivation"/>
    <property type="evidence" value="ECO:0000315"/>
    <property type="project" value="TAIR"/>
</dbReference>
<dbReference type="GO" id="GO:0009658">
    <property type="term" value="P:chloroplast organization"/>
    <property type="evidence" value="ECO:0000315"/>
    <property type="project" value="TAIR"/>
</dbReference>
<dbReference type="GO" id="GO:1901975">
    <property type="term" value="P:glycerate transmembrane transport"/>
    <property type="evidence" value="ECO:0000315"/>
    <property type="project" value="UniProtKB"/>
</dbReference>
<dbReference type="GO" id="GO:0097339">
    <property type="term" value="P:glycolate transmembrane transport"/>
    <property type="evidence" value="ECO:0000315"/>
    <property type="project" value="UniProtKB"/>
</dbReference>
<dbReference type="GO" id="GO:0048527">
    <property type="term" value="P:lateral root development"/>
    <property type="evidence" value="ECO:0000315"/>
    <property type="project" value="TAIR"/>
</dbReference>
<dbReference type="GO" id="GO:0009853">
    <property type="term" value="P:photorespiration"/>
    <property type="evidence" value="ECO:0000315"/>
    <property type="project" value="UniProtKB"/>
</dbReference>
<dbReference type="GO" id="GO:0009737">
    <property type="term" value="P:response to abscisic acid"/>
    <property type="evidence" value="ECO:0000315"/>
    <property type="project" value="TAIR"/>
</dbReference>
<dbReference type="GO" id="GO:0010118">
    <property type="term" value="P:stomatal movement"/>
    <property type="evidence" value="ECO:0000315"/>
    <property type="project" value="TAIR"/>
</dbReference>
<dbReference type="InterPro" id="IPR007300">
    <property type="entry name" value="CidB/LrgB"/>
</dbReference>
<dbReference type="PANTHER" id="PTHR30249:SF0">
    <property type="entry name" value="PLASTIDAL GLYCOLATE_GLYCERATE TRANSLOCATOR 1, CHLOROPLASTIC"/>
    <property type="match status" value="1"/>
</dbReference>
<dbReference type="PANTHER" id="PTHR30249">
    <property type="entry name" value="PUTATIVE SEROTONIN TRANSPORTER"/>
    <property type="match status" value="1"/>
</dbReference>
<dbReference type="Pfam" id="PF04172">
    <property type="entry name" value="LrgB"/>
    <property type="match status" value="1"/>
</dbReference>
<accession>Q9FVQ4</accession>
<accession>Q8LAS5</accession>
<gene>
    <name type="primary">PLGG1</name>
    <name type="ordered locus">At1g32080</name>
    <name type="ORF">F3C3.12</name>
    <name type="ORF">T12O21.2</name>
</gene>
<protein>
    <recommendedName>
        <fullName>Plastidal glycolate/glycerate translocator 1, chloroplastic</fullName>
    </recommendedName>
    <alternativeName>
        <fullName>Bacterial membrane protein LrgB-like protein</fullName>
        <shortName>AtLrgB</shortName>
    </alternativeName>
</protein>
<evidence type="ECO:0000255" key="1"/>
<evidence type="ECO:0000269" key="2">
    <source>
    </source>
</evidence>
<evidence type="ECO:0000269" key="3">
    <source>
    </source>
</evidence>
<evidence type="ECO:0000269" key="4">
    <source>
    </source>
</evidence>
<evidence type="ECO:0000269" key="5">
    <source>
    </source>
</evidence>
<evidence type="ECO:0000305" key="6"/>
<evidence type="ECO:0000305" key="7">
    <source>
    </source>
</evidence>
<evidence type="ECO:0000305" key="8">
    <source>
    </source>
</evidence>
<evidence type="ECO:0007744" key="9">
    <source>
    </source>
</evidence>
<keyword id="KW-0007">Acetylation</keyword>
<keyword id="KW-0150">Chloroplast</keyword>
<keyword id="KW-0472">Membrane</keyword>
<keyword id="KW-0601">Photorespiration</keyword>
<keyword id="KW-0934">Plastid</keyword>
<keyword id="KW-1185">Reference proteome</keyword>
<keyword id="KW-0809">Transit peptide</keyword>
<keyword id="KW-0812">Transmembrane</keyword>
<keyword id="KW-1133">Transmembrane helix</keyword>
<keyword id="KW-0813">Transport</keyword>
<reference key="1">
    <citation type="journal article" date="2000" name="Nature">
        <title>Sequence and analysis of chromosome 1 of the plant Arabidopsis thaliana.</title>
        <authorList>
            <person name="Theologis A."/>
            <person name="Ecker J.R."/>
            <person name="Palm C.J."/>
            <person name="Federspiel N.A."/>
            <person name="Kaul S."/>
            <person name="White O."/>
            <person name="Alonso J."/>
            <person name="Altafi H."/>
            <person name="Araujo R."/>
            <person name="Bowman C.L."/>
            <person name="Brooks S.Y."/>
            <person name="Buehler E."/>
            <person name="Chan A."/>
            <person name="Chao Q."/>
            <person name="Chen H."/>
            <person name="Cheuk R.F."/>
            <person name="Chin C.W."/>
            <person name="Chung M.K."/>
            <person name="Conn L."/>
            <person name="Conway A.B."/>
            <person name="Conway A.R."/>
            <person name="Creasy T.H."/>
            <person name="Dewar K."/>
            <person name="Dunn P."/>
            <person name="Etgu P."/>
            <person name="Feldblyum T.V."/>
            <person name="Feng J.-D."/>
            <person name="Fong B."/>
            <person name="Fujii C.Y."/>
            <person name="Gill J.E."/>
            <person name="Goldsmith A.D."/>
            <person name="Haas B."/>
            <person name="Hansen N.F."/>
            <person name="Hughes B."/>
            <person name="Huizar L."/>
            <person name="Hunter J.L."/>
            <person name="Jenkins J."/>
            <person name="Johnson-Hopson C."/>
            <person name="Khan S."/>
            <person name="Khaykin E."/>
            <person name="Kim C.J."/>
            <person name="Koo H.L."/>
            <person name="Kremenetskaia I."/>
            <person name="Kurtz D.B."/>
            <person name="Kwan A."/>
            <person name="Lam B."/>
            <person name="Langin-Hooper S."/>
            <person name="Lee A."/>
            <person name="Lee J.M."/>
            <person name="Lenz C.A."/>
            <person name="Li J.H."/>
            <person name="Li Y.-P."/>
            <person name="Lin X."/>
            <person name="Liu S.X."/>
            <person name="Liu Z.A."/>
            <person name="Luros J.S."/>
            <person name="Maiti R."/>
            <person name="Marziali A."/>
            <person name="Militscher J."/>
            <person name="Miranda M."/>
            <person name="Nguyen M."/>
            <person name="Nierman W.C."/>
            <person name="Osborne B.I."/>
            <person name="Pai G."/>
            <person name="Peterson J."/>
            <person name="Pham P.K."/>
            <person name="Rizzo M."/>
            <person name="Rooney T."/>
            <person name="Rowley D."/>
            <person name="Sakano H."/>
            <person name="Salzberg S.L."/>
            <person name="Schwartz J.R."/>
            <person name="Shinn P."/>
            <person name="Southwick A.M."/>
            <person name="Sun H."/>
            <person name="Tallon L.J."/>
            <person name="Tambunga G."/>
            <person name="Toriumi M.J."/>
            <person name="Town C.D."/>
            <person name="Utterback T."/>
            <person name="Van Aken S."/>
            <person name="Vaysberg M."/>
            <person name="Vysotskaia V.S."/>
            <person name="Walker M."/>
            <person name="Wu D."/>
            <person name="Yu G."/>
            <person name="Fraser C.M."/>
            <person name="Venter J.C."/>
            <person name="Davis R.W."/>
        </authorList>
    </citation>
    <scope>NUCLEOTIDE SEQUENCE [LARGE SCALE GENOMIC DNA]</scope>
    <source>
        <strain>cv. Columbia</strain>
    </source>
</reference>
<reference key="2">
    <citation type="journal article" date="2017" name="Plant J.">
        <title>Araport11: a complete reannotation of the Arabidopsis thaliana reference genome.</title>
        <authorList>
            <person name="Cheng C.Y."/>
            <person name="Krishnakumar V."/>
            <person name="Chan A.P."/>
            <person name="Thibaud-Nissen F."/>
            <person name="Schobel S."/>
            <person name="Town C.D."/>
        </authorList>
    </citation>
    <scope>GENOME REANNOTATION</scope>
    <source>
        <strain>cv. Columbia</strain>
    </source>
</reference>
<reference key="3">
    <citation type="journal article" date="2003" name="Science">
        <title>Empirical analysis of transcriptional activity in the Arabidopsis genome.</title>
        <authorList>
            <person name="Yamada K."/>
            <person name="Lim J."/>
            <person name="Dale J.M."/>
            <person name="Chen H."/>
            <person name="Shinn P."/>
            <person name="Palm C.J."/>
            <person name="Southwick A.M."/>
            <person name="Wu H.C."/>
            <person name="Kim C.J."/>
            <person name="Nguyen M."/>
            <person name="Pham P.K."/>
            <person name="Cheuk R.F."/>
            <person name="Karlin-Newmann G."/>
            <person name="Liu S.X."/>
            <person name="Lam B."/>
            <person name="Sakano H."/>
            <person name="Wu T."/>
            <person name="Yu G."/>
            <person name="Miranda M."/>
            <person name="Quach H.L."/>
            <person name="Tripp M."/>
            <person name="Chang C.H."/>
            <person name="Lee J.M."/>
            <person name="Toriumi M.J."/>
            <person name="Chan M.M."/>
            <person name="Tang C.C."/>
            <person name="Onodera C.S."/>
            <person name="Deng J.M."/>
            <person name="Akiyama K."/>
            <person name="Ansari Y."/>
            <person name="Arakawa T."/>
            <person name="Banh J."/>
            <person name="Banno F."/>
            <person name="Bowser L."/>
            <person name="Brooks S.Y."/>
            <person name="Carninci P."/>
            <person name="Chao Q."/>
            <person name="Choy N."/>
            <person name="Enju A."/>
            <person name="Goldsmith A.D."/>
            <person name="Gurjal M."/>
            <person name="Hansen N.F."/>
            <person name="Hayashizaki Y."/>
            <person name="Johnson-Hopson C."/>
            <person name="Hsuan V.W."/>
            <person name="Iida K."/>
            <person name="Karnes M."/>
            <person name="Khan S."/>
            <person name="Koesema E."/>
            <person name="Ishida J."/>
            <person name="Jiang P.X."/>
            <person name="Jones T."/>
            <person name="Kawai J."/>
            <person name="Kamiya A."/>
            <person name="Meyers C."/>
            <person name="Nakajima M."/>
            <person name="Narusaka M."/>
            <person name="Seki M."/>
            <person name="Sakurai T."/>
            <person name="Satou M."/>
            <person name="Tamse R."/>
            <person name="Vaysberg M."/>
            <person name="Wallender E.K."/>
            <person name="Wong C."/>
            <person name="Yamamura Y."/>
            <person name="Yuan S."/>
            <person name="Shinozaki K."/>
            <person name="Davis R.W."/>
            <person name="Theologis A."/>
            <person name="Ecker J.R."/>
        </authorList>
    </citation>
    <scope>NUCLEOTIDE SEQUENCE [LARGE SCALE MRNA]</scope>
    <source>
        <strain>cv. Columbia</strain>
    </source>
</reference>
<reference key="4">
    <citation type="submission" date="2002-03" db="EMBL/GenBank/DDBJ databases">
        <title>Full-length cDNA from Arabidopsis thaliana.</title>
        <authorList>
            <person name="Brover V.V."/>
            <person name="Troukhan M.E."/>
            <person name="Alexandrov N.A."/>
            <person name="Lu Y.-P."/>
            <person name="Flavell R.B."/>
            <person name="Feldmann K.A."/>
        </authorList>
    </citation>
    <scope>NUCLEOTIDE SEQUENCE [LARGE SCALE MRNA]</scope>
</reference>
<reference key="5">
    <citation type="journal article" date="2003" name="Mol. Cell. Proteomics">
        <title>Proteomics of the chloroplast envelope membranes from Arabidopsis thaliana.</title>
        <authorList>
            <person name="Ferro M."/>
            <person name="Salvi D."/>
            <person name="Brugiere S."/>
            <person name="Miras S."/>
            <person name="Kowalski S."/>
            <person name="Louwagie M."/>
            <person name="Garin J."/>
            <person name="Joyard J."/>
            <person name="Rolland N."/>
        </authorList>
    </citation>
    <scope>ACETYLATION AT ALA-77</scope>
    <scope>CLEAVAGE OF TRANSIT PEPTIDE AFTER GLN-76</scope>
    <scope>IDENTIFICATION BY MASS SPECTROMETRY</scope>
    <scope>SUBCELLULAR LOCATION [LARGE SCALE ANALYSIS]</scope>
    <source>
        <strain>cv. Wassilewskija</strain>
    </source>
</reference>
<reference key="6">
    <citation type="journal article" date="2012" name="Mol. Cell. Proteomics">
        <title>Comparative large-scale characterisation of plant vs. mammal proteins reveals similar and idiosyncratic N-alpha acetylation features.</title>
        <authorList>
            <person name="Bienvenut W.V."/>
            <person name="Sumpton D."/>
            <person name="Martinez A."/>
            <person name="Lilla S."/>
            <person name="Espagne C."/>
            <person name="Meinnel T."/>
            <person name="Giglione C."/>
        </authorList>
    </citation>
    <scope>ACETYLATION [LARGE SCALE ANALYSIS] AT ALA-77</scope>
    <scope>CLEAVAGE OF TRANSIT PEPTIDE [LARGE SCALE ANALYSIS] AFTER GLN-76</scope>
    <scope>IDENTIFICATION BY MASS SPECTROMETRY [LARGE SCALE ANALYSIS]</scope>
</reference>
<reference key="7">
    <citation type="journal article" date="2012" name="New Phytol.">
        <title>A chloroplast envelope membrane protein containing a putative LrgB domain related to the control of bacterial death and lysis is required for chloroplast development in Arabidopsis thaliana.</title>
        <authorList>
            <person name="Yang Y."/>
            <person name="Jin H."/>
            <person name="Chen Y."/>
            <person name="Lin W."/>
            <person name="Wang C."/>
            <person name="Chen Z."/>
            <person name="Han N."/>
            <person name="Bian H."/>
            <person name="Zhu M."/>
            <person name="Wang J."/>
        </authorList>
    </citation>
    <scope>FUNCTION</scope>
    <scope>TISSUE SPECIFICITY</scope>
    <scope>DISRUPTION PHENOTYPE</scope>
</reference>
<reference key="8">
    <citation type="journal article" date="2012" name="Plant Cell Physiol.">
        <title>Loss of the plastid envelope protein AtLrgB causes spontaneous chlorotic cell death in Arabidopsis thaliana.</title>
        <authorList>
            <person name="Yamaguchi M."/>
            <person name="Takechi K."/>
            <person name="Myouga F."/>
            <person name="Imura S."/>
            <person name="Sato H."/>
            <person name="Takio S."/>
            <person name="Shinozaki K."/>
            <person name="Takano H."/>
        </authorList>
    </citation>
    <scope>FUNCTION</scope>
    <scope>TISSUE SPECIFICITY</scope>
</reference>
<reference key="9">
    <citation type="journal article" date="2013" name="Proc. Natl. Acad. Sci. U.S.A.">
        <title>PLGG1, a plastidic glycolate glycerate transporter, is required for photorespiration and defines a unique class of metabolite transporters.</title>
        <authorList>
            <person name="Pick T.R."/>
            <person name="Braeutigam A."/>
            <person name="Schulz M.A."/>
            <person name="Obata T."/>
            <person name="Fernie A.R."/>
            <person name="Weber A.P."/>
        </authorList>
    </citation>
    <scope>FUNCTION</scope>
    <scope>SUBCELLULAR LOCATION</scope>
    <scope>DISRUPTION PHENOTYPE</scope>
    <source>
        <strain>cv. Columbia</strain>
    </source>
</reference>
<comment type="function">
    <text evidence="3 4 5">Glycolate/glycerate transporter required for photorespiration.</text>
</comment>
<comment type="subcellular location">
    <subcellularLocation>
        <location evidence="7 8">Plastid</location>
        <location evidence="7 8">Chloroplast membrane</location>
        <topology evidence="7 8">Multi-pass membrane protein</topology>
    </subcellularLocation>
</comment>
<comment type="tissue specificity">
    <text evidence="3 4">Expressed in leaves, stems and flowers, but not in roots.</text>
</comment>
<comment type="disruption phenotype">
    <text evidence="3 5">Interveinal chlorotic and premature necrotic leaves. Bleached leaf phenotype when grown under ambient air, but normal growth under CO(2)-enriched air.</text>
</comment>
<comment type="similarity">
    <text evidence="6">Belongs to the CidB/LrgB family.</text>
</comment>
<comment type="caution">
    <text evidence="6">Was initially thought to be involved in chloroplast development or function against cell death (PubMed:21916894, PubMed:22180599).</text>
</comment>
<sequence>MATLLATPIFSPLASSPARNRLSCSKIRFGSKNGKILNSDGAQKLNLSKFRKPDGQRFLQMGSSKEMNFERKLSVQAMDGAGTGNTSTISRNVIAISHLLVSLGIILAADYFLKQAFVAASIKFPSALFGMFCIFSVLMIFDSVVPAAANGLMNFFEPAFLFIQRWLPLFYVPSLVVLPLSVRDIPAASGVKICYIVAGGWLASLCVAGYTAIAVRKMVKTEMTEAEPMAKPSPFSTLELWSWSGIFVVSFVGALFYPNSLGTSARTSLPFLLSSTVLGYIVGSGLPSSIKKVFHPIICCALSAVLAALAFGYASGSGLDPVLGNYLTKVASDPGAGDILMGFLGSVILSFAFSMFKQRKLVKRHAAEIFTSVIVSTVFSLYSTALVGRLVGLEPSLTVSILPRCITVALALSIVSLFEGTNSSLTAAVVVVTGLIGANFVQVVLDKLRLRDPIARGIATASSAHGLGTAALSAKEPEALPFCAIAYALTGIFGSLLCSVPAVRQSLLAVVG</sequence>